<protein>
    <recommendedName>
        <fullName evidence="1">5-oxoprolinase subunit A</fullName>
        <shortName evidence="1">5-OPase subunit A</shortName>
        <ecNumber evidence="1">3.5.2.9</ecNumber>
    </recommendedName>
    <alternativeName>
        <fullName evidence="1">5-oxoprolinase (ATP-hydrolyzing) subunit A</fullName>
    </alternativeName>
</protein>
<feature type="chain" id="PRO_1000045230" description="5-oxoprolinase subunit A">
    <location>
        <begin position="1"/>
        <end position="251"/>
    </location>
</feature>
<keyword id="KW-0067">ATP-binding</keyword>
<keyword id="KW-0378">Hydrolase</keyword>
<keyword id="KW-0547">Nucleotide-binding</keyword>
<organism>
    <name type="scientific">Vibrio campbellii (strain ATCC BAA-1116)</name>
    <dbReference type="NCBI Taxonomy" id="2902295"/>
    <lineage>
        <taxon>Bacteria</taxon>
        <taxon>Pseudomonadati</taxon>
        <taxon>Pseudomonadota</taxon>
        <taxon>Gammaproteobacteria</taxon>
        <taxon>Vibrionales</taxon>
        <taxon>Vibrionaceae</taxon>
        <taxon>Vibrio</taxon>
    </lineage>
</organism>
<comment type="function">
    <text evidence="1">Catalyzes the cleavage of 5-oxoproline to form L-glutamate coupled to the hydrolysis of ATP to ADP and inorganic phosphate.</text>
</comment>
<comment type="catalytic activity">
    <reaction evidence="1">
        <text>5-oxo-L-proline + ATP + 2 H2O = L-glutamate + ADP + phosphate + H(+)</text>
        <dbReference type="Rhea" id="RHEA:10348"/>
        <dbReference type="ChEBI" id="CHEBI:15377"/>
        <dbReference type="ChEBI" id="CHEBI:15378"/>
        <dbReference type="ChEBI" id="CHEBI:29985"/>
        <dbReference type="ChEBI" id="CHEBI:30616"/>
        <dbReference type="ChEBI" id="CHEBI:43474"/>
        <dbReference type="ChEBI" id="CHEBI:58402"/>
        <dbReference type="ChEBI" id="CHEBI:456216"/>
        <dbReference type="EC" id="3.5.2.9"/>
    </reaction>
</comment>
<comment type="subunit">
    <text evidence="1">Forms a complex composed of PxpA, PxpB and PxpC.</text>
</comment>
<comment type="similarity">
    <text evidence="1">Belongs to the LamB/PxpA family.</text>
</comment>
<reference key="1">
    <citation type="submission" date="2007-08" db="EMBL/GenBank/DDBJ databases">
        <authorList>
            <consortium name="The Vibrio harveyi Genome Sequencing Project"/>
            <person name="Bassler B."/>
            <person name="Clifton S.W."/>
            <person name="Fulton L."/>
            <person name="Delehaunty K."/>
            <person name="Fronick C."/>
            <person name="Harrison M."/>
            <person name="Markivic C."/>
            <person name="Fulton R."/>
            <person name="Tin-Wollam A.-M."/>
            <person name="Shah N."/>
            <person name="Pepin K."/>
            <person name="Nash W."/>
            <person name="Thiruvilangam P."/>
            <person name="Bhonagiri V."/>
            <person name="Waters C."/>
            <person name="Tu K.C."/>
            <person name="Irgon J."/>
            <person name="Wilson R.K."/>
        </authorList>
    </citation>
    <scope>NUCLEOTIDE SEQUENCE [LARGE SCALE GENOMIC DNA]</scope>
    <source>
        <strain>ATCC BAA-1116 / BB120</strain>
    </source>
</reference>
<name>PXPA_VIBC1</name>
<accession>A7N8I1</accession>
<sequence>MTLNNQQLTLNCDMGESFGAWKMGADECVMPFVDMANIACGFHASDPNVMHDTITLANQHDVEIGAHPGYPDLQGFGRRSIKMTNDEITNMVIYQVGALQALCKAQYTDIGYIKPHGALYNDMMQSDGVFLAVVKAVALFKVPLMILASKENEKYLEIADDFDVPLLFEAFADRLYQDDGMLTPRTQPNAVLNSEHAILEQVRMLAESGRVKTASGQYILLEADTICVHGDNNESIALVQKIRQSLYTGGN</sequence>
<proteinExistence type="inferred from homology"/>
<dbReference type="EC" id="3.5.2.9" evidence="1"/>
<dbReference type="EMBL" id="CP000790">
    <property type="protein sequence ID" value="ABU73689.1"/>
    <property type="molecule type" value="Genomic_DNA"/>
</dbReference>
<dbReference type="RefSeq" id="WP_012129379.1">
    <property type="nucleotide sequence ID" value="NC_022270.1"/>
</dbReference>
<dbReference type="SMR" id="A7N8I1"/>
<dbReference type="KEGG" id="vha:VIBHAR_05795"/>
<dbReference type="PATRIC" id="fig|338187.25.peg.4488"/>
<dbReference type="Proteomes" id="UP000008152">
    <property type="component" value="Chromosome II"/>
</dbReference>
<dbReference type="GO" id="GO:0017168">
    <property type="term" value="F:5-oxoprolinase (ATP-hydrolyzing) activity"/>
    <property type="evidence" value="ECO:0007669"/>
    <property type="project" value="UniProtKB-UniRule"/>
</dbReference>
<dbReference type="GO" id="GO:0005524">
    <property type="term" value="F:ATP binding"/>
    <property type="evidence" value="ECO:0007669"/>
    <property type="project" value="UniProtKB-UniRule"/>
</dbReference>
<dbReference type="GO" id="GO:0005975">
    <property type="term" value="P:carbohydrate metabolic process"/>
    <property type="evidence" value="ECO:0007669"/>
    <property type="project" value="InterPro"/>
</dbReference>
<dbReference type="CDD" id="cd10787">
    <property type="entry name" value="LamB_YcsF_like"/>
    <property type="match status" value="1"/>
</dbReference>
<dbReference type="Gene3D" id="3.20.20.370">
    <property type="entry name" value="Glycoside hydrolase/deacetylase"/>
    <property type="match status" value="1"/>
</dbReference>
<dbReference type="HAMAP" id="MF_00691">
    <property type="entry name" value="PxpA"/>
    <property type="match status" value="1"/>
</dbReference>
<dbReference type="InterPro" id="IPR011330">
    <property type="entry name" value="Glyco_hydro/deAcase_b/a-brl"/>
</dbReference>
<dbReference type="InterPro" id="IPR005501">
    <property type="entry name" value="LamB/YcsF/PxpA-like"/>
</dbReference>
<dbReference type="NCBIfam" id="NF003814">
    <property type="entry name" value="PRK05406.1-3"/>
    <property type="match status" value="1"/>
</dbReference>
<dbReference type="NCBIfam" id="NF003816">
    <property type="entry name" value="PRK05406.1-5"/>
    <property type="match status" value="1"/>
</dbReference>
<dbReference type="PANTHER" id="PTHR30292:SF0">
    <property type="entry name" value="5-OXOPROLINASE SUBUNIT A"/>
    <property type="match status" value="1"/>
</dbReference>
<dbReference type="PANTHER" id="PTHR30292">
    <property type="entry name" value="UNCHARACTERIZED PROTEIN YBGL-RELATED"/>
    <property type="match status" value="1"/>
</dbReference>
<dbReference type="Pfam" id="PF03746">
    <property type="entry name" value="LamB_YcsF"/>
    <property type="match status" value="1"/>
</dbReference>
<dbReference type="SUPFAM" id="SSF88713">
    <property type="entry name" value="Glycoside hydrolase/deacetylase"/>
    <property type="match status" value="1"/>
</dbReference>
<evidence type="ECO:0000255" key="1">
    <source>
        <dbReference type="HAMAP-Rule" id="MF_00691"/>
    </source>
</evidence>
<gene>
    <name evidence="1" type="primary">pxpA</name>
    <name type="ordered locus">VIBHAR_05795</name>
</gene>